<dbReference type="EMBL" id="CP000647">
    <property type="protein sequence ID" value="ABR79242.1"/>
    <property type="molecule type" value="Genomic_DNA"/>
</dbReference>
<dbReference type="RefSeq" id="WP_002921188.1">
    <property type="nucleotide sequence ID" value="NC_009648.1"/>
</dbReference>
<dbReference type="SMR" id="A6TFA8"/>
<dbReference type="STRING" id="272620.KPN_03855"/>
<dbReference type="PaxDb" id="272620-KPN_03855"/>
<dbReference type="EnsemblBacteria" id="ABR79242">
    <property type="protein sequence ID" value="ABR79242"/>
    <property type="gene ID" value="KPN_03855"/>
</dbReference>
<dbReference type="KEGG" id="kpn:KPN_03855"/>
<dbReference type="HOGENOM" id="CLU_113319_1_4_6"/>
<dbReference type="Proteomes" id="UP000000265">
    <property type="component" value="Chromosome"/>
</dbReference>
<dbReference type="GO" id="GO:0003700">
    <property type="term" value="F:DNA-binding transcription factor activity"/>
    <property type="evidence" value="ECO:0007669"/>
    <property type="project" value="UniProtKB-UniRule"/>
</dbReference>
<dbReference type="GO" id="GO:0016151">
    <property type="term" value="F:nickel cation binding"/>
    <property type="evidence" value="ECO:0007669"/>
    <property type="project" value="UniProtKB-UniRule"/>
</dbReference>
<dbReference type="GO" id="GO:0043565">
    <property type="term" value="F:sequence-specific DNA binding"/>
    <property type="evidence" value="ECO:0007669"/>
    <property type="project" value="UniProtKB-ARBA"/>
</dbReference>
<dbReference type="GO" id="GO:0010045">
    <property type="term" value="P:response to nickel cation"/>
    <property type="evidence" value="ECO:0007669"/>
    <property type="project" value="InterPro"/>
</dbReference>
<dbReference type="CDD" id="cd22231">
    <property type="entry name" value="RHH_NikR_HicB-like"/>
    <property type="match status" value="1"/>
</dbReference>
<dbReference type="Gene3D" id="3.30.70.1150">
    <property type="entry name" value="ACT-like. Chain A, domain 2"/>
    <property type="match status" value="1"/>
</dbReference>
<dbReference type="Gene3D" id="1.10.1220.10">
    <property type="entry name" value="Met repressor-like"/>
    <property type="match status" value="1"/>
</dbReference>
<dbReference type="HAMAP" id="MF_00476">
    <property type="entry name" value="NikR"/>
    <property type="match status" value="1"/>
</dbReference>
<dbReference type="InterPro" id="IPR027271">
    <property type="entry name" value="Acetolactate_synth/TF_NikR_C"/>
</dbReference>
<dbReference type="InterPro" id="IPR045865">
    <property type="entry name" value="ACT-like_dom_sf"/>
</dbReference>
<dbReference type="InterPro" id="IPR013321">
    <property type="entry name" value="Arc_rbn_hlx_hlx"/>
</dbReference>
<dbReference type="InterPro" id="IPR002145">
    <property type="entry name" value="CopG"/>
</dbReference>
<dbReference type="InterPro" id="IPR050192">
    <property type="entry name" value="CopG/NikR_regulator"/>
</dbReference>
<dbReference type="InterPro" id="IPR022988">
    <property type="entry name" value="Ni_resp_reg_NikR"/>
</dbReference>
<dbReference type="InterPro" id="IPR014160">
    <property type="entry name" value="Nickel_NikR_proteobac"/>
</dbReference>
<dbReference type="InterPro" id="IPR010985">
    <property type="entry name" value="Ribbon_hlx_hlx"/>
</dbReference>
<dbReference type="InterPro" id="IPR014864">
    <property type="entry name" value="TF_NikR_Ni-bd_C"/>
</dbReference>
<dbReference type="NCBIfam" id="TIGR02793">
    <property type="entry name" value="nikR"/>
    <property type="match status" value="1"/>
</dbReference>
<dbReference type="NCBIfam" id="NF002815">
    <property type="entry name" value="PRK02967.1"/>
    <property type="match status" value="1"/>
</dbReference>
<dbReference type="NCBIfam" id="NF003381">
    <property type="entry name" value="PRK04460.1"/>
    <property type="match status" value="1"/>
</dbReference>
<dbReference type="PANTHER" id="PTHR34719">
    <property type="entry name" value="NICKEL-RESPONSIVE REGULATOR"/>
    <property type="match status" value="1"/>
</dbReference>
<dbReference type="PANTHER" id="PTHR34719:SF2">
    <property type="entry name" value="NICKEL-RESPONSIVE REGULATOR"/>
    <property type="match status" value="1"/>
</dbReference>
<dbReference type="Pfam" id="PF08753">
    <property type="entry name" value="NikR_C"/>
    <property type="match status" value="1"/>
</dbReference>
<dbReference type="Pfam" id="PF01402">
    <property type="entry name" value="RHH_1"/>
    <property type="match status" value="1"/>
</dbReference>
<dbReference type="SUPFAM" id="SSF55021">
    <property type="entry name" value="ACT-like"/>
    <property type="match status" value="1"/>
</dbReference>
<dbReference type="SUPFAM" id="SSF47598">
    <property type="entry name" value="Ribbon-helix-helix"/>
    <property type="match status" value="1"/>
</dbReference>
<reference key="1">
    <citation type="submission" date="2006-09" db="EMBL/GenBank/DDBJ databases">
        <authorList>
            <consortium name="The Klebsiella pneumonia Genome Sequencing Project"/>
            <person name="McClelland M."/>
            <person name="Sanderson E.K."/>
            <person name="Spieth J."/>
            <person name="Clifton W.S."/>
            <person name="Latreille P."/>
            <person name="Sabo A."/>
            <person name="Pepin K."/>
            <person name="Bhonagiri V."/>
            <person name="Porwollik S."/>
            <person name="Ali J."/>
            <person name="Wilson R.K."/>
        </authorList>
    </citation>
    <scope>NUCLEOTIDE SEQUENCE [LARGE SCALE GENOMIC DNA]</scope>
    <source>
        <strain>ATCC 700721 / MGH 78578</strain>
    </source>
</reference>
<organism>
    <name type="scientific">Klebsiella pneumoniae subsp. pneumoniae (strain ATCC 700721 / MGH 78578)</name>
    <dbReference type="NCBI Taxonomy" id="272620"/>
    <lineage>
        <taxon>Bacteria</taxon>
        <taxon>Pseudomonadati</taxon>
        <taxon>Pseudomonadota</taxon>
        <taxon>Gammaproteobacteria</taxon>
        <taxon>Enterobacterales</taxon>
        <taxon>Enterobacteriaceae</taxon>
        <taxon>Klebsiella/Raoultella group</taxon>
        <taxon>Klebsiella</taxon>
        <taxon>Klebsiella pneumoniae complex</taxon>
    </lineage>
</organism>
<comment type="function">
    <text evidence="1">Transcriptional repressor of the nikABCDE operon. Is active in the presence of excessive concentrations of intracellular nickel.</text>
</comment>
<comment type="cofactor">
    <cofactor evidence="1">
        <name>Ni(2+)</name>
        <dbReference type="ChEBI" id="CHEBI:49786"/>
    </cofactor>
    <text evidence="1">Binds 1 nickel ion per subunit.</text>
</comment>
<comment type="subunit">
    <text evidence="1">Homotetramer.</text>
</comment>
<comment type="similarity">
    <text evidence="1">Belongs to the transcriptional regulatory CopG/NikR family.</text>
</comment>
<name>NIKR_KLEP7</name>
<gene>
    <name evidence="1" type="primary">nikR</name>
    <name type="ordered locus">KPN78578_38180</name>
    <name type="ORF">KPN_03855</name>
</gene>
<accession>A6TFA8</accession>
<proteinExistence type="inferred from homology"/>
<protein>
    <recommendedName>
        <fullName evidence="1">Nickel-responsive regulator</fullName>
    </recommendedName>
</protein>
<evidence type="ECO:0000255" key="1">
    <source>
        <dbReference type="HAMAP-Rule" id="MF_00476"/>
    </source>
</evidence>
<feature type="chain" id="PRO_1000014070" description="Nickel-responsive regulator">
    <location>
        <begin position="1"/>
        <end position="132"/>
    </location>
</feature>
<feature type="binding site" evidence="1">
    <location>
        <position position="76"/>
    </location>
    <ligand>
        <name>Ni(2+)</name>
        <dbReference type="ChEBI" id="CHEBI:49786"/>
    </ligand>
</feature>
<feature type="binding site" evidence="1">
    <location>
        <position position="87"/>
    </location>
    <ligand>
        <name>Ni(2+)</name>
        <dbReference type="ChEBI" id="CHEBI:49786"/>
    </ligand>
</feature>
<feature type="binding site" evidence="1">
    <location>
        <position position="89"/>
    </location>
    <ligand>
        <name>Ni(2+)</name>
        <dbReference type="ChEBI" id="CHEBI:49786"/>
    </ligand>
</feature>
<feature type="binding site" evidence="1">
    <location>
        <position position="95"/>
    </location>
    <ligand>
        <name>Ni(2+)</name>
        <dbReference type="ChEBI" id="CHEBI:49786"/>
    </ligand>
</feature>
<keyword id="KW-0238">DNA-binding</keyword>
<keyword id="KW-0479">Metal-binding</keyword>
<keyword id="KW-0533">Nickel</keyword>
<keyword id="KW-0678">Repressor</keyword>
<keyword id="KW-0804">Transcription</keyword>
<keyword id="KW-0805">Transcription regulation</keyword>
<sequence length="132" mass="14901">MQRVTLTLDDDLLAALDALSARRGYHNRSEAVRDILRDALNQDPPSPESRRGYAVLSYVYEHEKRELASRLVATQHHHHDLSVATLHVHISHDDCLEIAVLKGDMAEVQHFADDVIAQRGVRHGHLQCLADD</sequence>